<sequence>MIFYTLEHILTHISFSLVSIGITIFLITLSVDEIIGLYDSSEKGVIGTFLCITGLLVTRWAYSGHFPLSNLYESLLFLSWSFAIIHMFPYFKKQKSYVRTITSSSTIFTQGLVTSGLLSEMQQSEILVPALQSQWLMMHVSMMVLGYAALLCGSLLSVALLVITFRKALRIFSKKKAFLKDSFSFVEIQYRNEPSNVLLSTSFISSKNYYRAQLIQQLDRWSSRIISLGFIFLTIGILSGAVWANEAWGSYWNWDPKETWAFITWTMFAIYLHTRTNPNFQSVNSAIVAFLGFIIIWICYFGVNLLGIGLHSYGSFNLH</sequence>
<accession>B0Z508</accession>
<proteinExistence type="inferred from homology"/>
<dbReference type="EMBL" id="EU262889">
    <property type="protein sequence ID" value="ABW98920.1"/>
    <property type="molecule type" value="Genomic_DNA"/>
</dbReference>
<dbReference type="RefSeq" id="YP_001687415.1">
    <property type="nucleotide sequence ID" value="NC_010361.1"/>
</dbReference>
<dbReference type="SMR" id="B0Z508"/>
<dbReference type="GeneID" id="5952061"/>
<dbReference type="GO" id="GO:0009535">
    <property type="term" value="C:chloroplast thylakoid membrane"/>
    <property type="evidence" value="ECO:0007669"/>
    <property type="project" value="UniProtKB-SubCell"/>
</dbReference>
<dbReference type="GO" id="GO:0005886">
    <property type="term" value="C:plasma membrane"/>
    <property type="evidence" value="ECO:0007669"/>
    <property type="project" value="TreeGrafter"/>
</dbReference>
<dbReference type="GO" id="GO:0020037">
    <property type="term" value="F:heme binding"/>
    <property type="evidence" value="ECO:0007669"/>
    <property type="project" value="InterPro"/>
</dbReference>
<dbReference type="GO" id="GO:0017004">
    <property type="term" value="P:cytochrome complex assembly"/>
    <property type="evidence" value="ECO:0007669"/>
    <property type="project" value="UniProtKB-UniRule"/>
</dbReference>
<dbReference type="HAMAP" id="MF_01391">
    <property type="entry name" value="CytC_CcsA"/>
    <property type="match status" value="1"/>
</dbReference>
<dbReference type="InterPro" id="IPR002541">
    <property type="entry name" value="Cyt_c_assembly"/>
</dbReference>
<dbReference type="InterPro" id="IPR017562">
    <property type="entry name" value="Cyt_c_biogenesis_CcsA"/>
</dbReference>
<dbReference type="InterPro" id="IPR045062">
    <property type="entry name" value="Cyt_c_biogenesis_CcsA/CcmC"/>
</dbReference>
<dbReference type="NCBIfam" id="TIGR03144">
    <property type="entry name" value="cytochr_II_ccsB"/>
    <property type="match status" value="1"/>
</dbReference>
<dbReference type="PANTHER" id="PTHR30071:SF1">
    <property type="entry name" value="CYTOCHROME B_B6 PROTEIN-RELATED"/>
    <property type="match status" value="1"/>
</dbReference>
<dbReference type="PANTHER" id="PTHR30071">
    <property type="entry name" value="HEME EXPORTER PROTEIN C"/>
    <property type="match status" value="1"/>
</dbReference>
<dbReference type="Pfam" id="PF01578">
    <property type="entry name" value="Cytochrom_C_asm"/>
    <property type="match status" value="1"/>
</dbReference>
<gene>
    <name evidence="1" type="primary">ccsA</name>
</gene>
<name>CCSA_OENBI</name>
<keyword id="KW-0150">Chloroplast</keyword>
<keyword id="KW-0201">Cytochrome c-type biogenesis</keyword>
<keyword id="KW-0472">Membrane</keyword>
<keyword id="KW-0934">Plastid</keyword>
<keyword id="KW-0793">Thylakoid</keyword>
<keyword id="KW-0812">Transmembrane</keyword>
<keyword id="KW-1133">Transmembrane helix</keyword>
<organism>
    <name type="scientific">Oenothera biennis</name>
    <name type="common">German evening primrose</name>
    <name type="synonym">Onagra biennis</name>
    <dbReference type="NCBI Taxonomy" id="3942"/>
    <lineage>
        <taxon>Eukaryota</taxon>
        <taxon>Viridiplantae</taxon>
        <taxon>Streptophyta</taxon>
        <taxon>Embryophyta</taxon>
        <taxon>Tracheophyta</taxon>
        <taxon>Spermatophyta</taxon>
        <taxon>Magnoliopsida</taxon>
        <taxon>eudicotyledons</taxon>
        <taxon>Gunneridae</taxon>
        <taxon>Pentapetalae</taxon>
        <taxon>rosids</taxon>
        <taxon>malvids</taxon>
        <taxon>Myrtales</taxon>
        <taxon>Onagraceae</taxon>
        <taxon>Onagroideae</taxon>
        <taxon>Onagreae</taxon>
        <taxon>Oenothera</taxon>
    </lineage>
</organism>
<geneLocation type="chloroplast"/>
<protein>
    <recommendedName>
        <fullName evidence="1">Cytochrome c biogenesis protein CcsA</fullName>
    </recommendedName>
</protein>
<evidence type="ECO:0000255" key="1">
    <source>
        <dbReference type="HAMAP-Rule" id="MF_01391"/>
    </source>
</evidence>
<reference key="1">
    <citation type="journal article" date="2008" name="Nucleic Acids Res.">
        <title>The complete nucleotide sequences of the five genetically distinct plastid genomes of Oenothera, subsection Oenothera: I. Sequence evaluation and plastome evolution.</title>
        <authorList>
            <person name="Greiner S."/>
            <person name="Wang X."/>
            <person name="Rauwolf U."/>
            <person name="Silber M.V."/>
            <person name="Mayer K."/>
            <person name="Meurer J."/>
            <person name="Haberer G."/>
            <person name="Herrmann R.G."/>
        </authorList>
    </citation>
    <scope>NUCLEOTIDE SEQUENCE [LARGE SCALE GENOMIC DNA]</scope>
    <source>
        <strain>cv. Suaveolens Grado</strain>
    </source>
</reference>
<comment type="function">
    <text evidence="1">Required during biogenesis of c-type cytochromes (cytochrome c6 and cytochrome f) at the step of heme attachment.</text>
</comment>
<comment type="subunit">
    <text evidence="1">May interact with Ccs1.</text>
</comment>
<comment type="subcellular location">
    <subcellularLocation>
        <location evidence="1">Plastid</location>
        <location evidence="1">Chloroplast thylakoid membrane</location>
        <topology evidence="1">Multi-pass membrane protein</topology>
    </subcellularLocation>
</comment>
<comment type="similarity">
    <text evidence="1">Belongs to the CcmF/CycK/Ccl1/NrfE/CcsA family.</text>
</comment>
<feature type="chain" id="PRO_0000353777" description="Cytochrome c biogenesis protein CcsA">
    <location>
        <begin position="1"/>
        <end position="319"/>
    </location>
</feature>
<feature type="transmembrane region" description="Helical" evidence="1">
    <location>
        <begin position="9"/>
        <end position="29"/>
    </location>
</feature>
<feature type="transmembrane region" description="Helical" evidence="1">
    <location>
        <begin position="44"/>
        <end position="64"/>
    </location>
</feature>
<feature type="transmembrane region" description="Helical" evidence="1">
    <location>
        <begin position="71"/>
        <end position="91"/>
    </location>
</feature>
<feature type="transmembrane region" description="Helical" evidence="1">
    <location>
        <begin position="143"/>
        <end position="163"/>
    </location>
</feature>
<feature type="transmembrane region" description="Helical" evidence="1">
    <location>
        <begin position="225"/>
        <end position="245"/>
    </location>
</feature>
<feature type="transmembrane region" description="Helical" evidence="1">
    <location>
        <begin position="259"/>
        <end position="273"/>
    </location>
</feature>
<feature type="transmembrane region" description="Helical" evidence="1">
    <location>
        <begin position="286"/>
        <end position="306"/>
    </location>
</feature>